<feature type="transit peptide" description="Mitochondrion" evidence="2">
    <location>
        <begin position="1"/>
        <end status="unknown"/>
    </location>
</feature>
<feature type="chain" id="PRO_0000002655" description="ATP synthase subunit 5, mitochondrial">
    <location>
        <begin status="unknown"/>
        <end position="216"/>
    </location>
</feature>
<accession>O74479</accession>
<proteinExistence type="inferred from homology"/>
<protein>
    <recommendedName>
        <fullName>ATP synthase subunit 5, mitochondrial</fullName>
        <shortName>ATP synthase chain 5</shortName>
    </recommendedName>
    <alternativeName>
        <fullName>Oligomycin sensitivity conferral protein</fullName>
        <shortName>OSCP</shortName>
    </alternativeName>
</protein>
<organism>
    <name type="scientific">Schizosaccharomyces pombe (strain 972 / ATCC 24843)</name>
    <name type="common">Fission yeast</name>
    <dbReference type="NCBI Taxonomy" id="284812"/>
    <lineage>
        <taxon>Eukaryota</taxon>
        <taxon>Fungi</taxon>
        <taxon>Dikarya</taxon>
        <taxon>Ascomycota</taxon>
        <taxon>Taphrinomycotina</taxon>
        <taxon>Schizosaccharomycetes</taxon>
        <taxon>Schizosaccharomycetales</taxon>
        <taxon>Schizosaccharomycetaceae</taxon>
        <taxon>Schizosaccharomyces</taxon>
    </lineage>
</organism>
<gene>
    <name type="primary">atp5</name>
    <name type="ORF">SPCC1840.06</name>
</gene>
<evidence type="ECO:0000250" key="1"/>
<evidence type="ECO:0000255" key="2"/>
<evidence type="ECO:0000305" key="3"/>
<keyword id="KW-0066">ATP synthesis</keyword>
<keyword id="KW-0375">Hydrogen ion transport</keyword>
<keyword id="KW-0406">Ion transport</keyword>
<keyword id="KW-0472">Membrane</keyword>
<keyword id="KW-0496">Mitochondrion</keyword>
<keyword id="KW-0999">Mitochondrion inner membrane</keyword>
<keyword id="KW-1185">Reference proteome</keyword>
<keyword id="KW-0809">Transit peptide</keyword>
<keyword id="KW-0813">Transport</keyword>
<name>ATPO_SCHPO</name>
<comment type="function">
    <text evidence="1">Mitochondrial membrane ATP synthase (F(1)F(0) ATP synthase or Complex V) produces ATP from ADP in the presence of a proton gradient across the membrane which is generated by electron transport complexes of the respiratory chain. F-type ATPases consist of two structural domains, F(1) - containing the extramembraneous catalytic core and F(0) - containing the membrane proton channel, linked together by a central stalk and a peripheral stalk. During catalysis, ATP synthesis in the catalytic domain of F(1) is coupled via a rotary mechanism of the central stalk subunits to proton translocation. Part of the complex F(0) domain and the peripheric stalk, which acts as a stator to hold the catalytic alpha(3)beta(3) subcomplex and subunit a/ATP6 static relative to the rotary elements (By similarity).</text>
</comment>
<comment type="subunit">
    <text evidence="1">F-type ATPases have 2 components, CF(1) - the catalytic core - and CF(0) - the membrane proton channel. CF(1) has five subunits: alpha(3), beta(3), gamma(1), delta(1), epsilon(1). CF(0) has three main subunits: a, b and c (By similarity).</text>
</comment>
<comment type="subcellular location">
    <subcellularLocation>
        <location>Mitochondrion</location>
    </subcellularLocation>
    <subcellularLocation>
        <location>Mitochondrion inner membrane</location>
    </subcellularLocation>
</comment>
<comment type="similarity">
    <text evidence="3">Belongs to the ATPase delta chain family.</text>
</comment>
<sequence>MNHIFRRSIPITARLPSLGIRSLATATASAHPPVQLYGLDGSYASSLYTAAVKESKLDNVEKALNKLSGVLQQRPEFEQYISSPWLTREDKKILVSSLTQMTGNEPLLKNFYNVLLDNHRLYLLTRIQKQFSTLMRAKRGEIEVKITSATPLDSKILSRLESRIAKSKYGKGKLLVSNKVTPSIIGGLIVEIGDNILDVSVGSRLNNLNKLLSEPI</sequence>
<reference key="1">
    <citation type="journal article" date="2002" name="Nature">
        <title>The genome sequence of Schizosaccharomyces pombe.</title>
        <authorList>
            <person name="Wood V."/>
            <person name="Gwilliam R."/>
            <person name="Rajandream M.A."/>
            <person name="Lyne M.H."/>
            <person name="Lyne R."/>
            <person name="Stewart A."/>
            <person name="Sgouros J.G."/>
            <person name="Peat N."/>
            <person name="Hayles J."/>
            <person name="Baker S.G."/>
            <person name="Basham D."/>
            <person name="Bowman S."/>
            <person name="Brooks K."/>
            <person name="Brown D."/>
            <person name="Brown S."/>
            <person name="Chillingworth T."/>
            <person name="Churcher C.M."/>
            <person name="Collins M."/>
            <person name="Connor R."/>
            <person name="Cronin A."/>
            <person name="Davis P."/>
            <person name="Feltwell T."/>
            <person name="Fraser A."/>
            <person name="Gentles S."/>
            <person name="Goble A."/>
            <person name="Hamlin N."/>
            <person name="Harris D.E."/>
            <person name="Hidalgo J."/>
            <person name="Hodgson G."/>
            <person name="Holroyd S."/>
            <person name="Hornsby T."/>
            <person name="Howarth S."/>
            <person name="Huckle E.J."/>
            <person name="Hunt S."/>
            <person name="Jagels K."/>
            <person name="James K.D."/>
            <person name="Jones L."/>
            <person name="Jones M."/>
            <person name="Leather S."/>
            <person name="McDonald S."/>
            <person name="McLean J."/>
            <person name="Mooney P."/>
            <person name="Moule S."/>
            <person name="Mungall K.L."/>
            <person name="Murphy L.D."/>
            <person name="Niblett D."/>
            <person name="Odell C."/>
            <person name="Oliver K."/>
            <person name="O'Neil S."/>
            <person name="Pearson D."/>
            <person name="Quail M.A."/>
            <person name="Rabbinowitsch E."/>
            <person name="Rutherford K.M."/>
            <person name="Rutter S."/>
            <person name="Saunders D."/>
            <person name="Seeger K."/>
            <person name="Sharp S."/>
            <person name="Skelton J."/>
            <person name="Simmonds M.N."/>
            <person name="Squares R."/>
            <person name="Squares S."/>
            <person name="Stevens K."/>
            <person name="Taylor K."/>
            <person name="Taylor R.G."/>
            <person name="Tivey A."/>
            <person name="Walsh S.V."/>
            <person name="Warren T."/>
            <person name="Whitehead S."/>
            <person name="Woodward J.R."/>
            <person name="Volckaert G."/>
            <person name="Aert R."/>
            <person name="Robben J."/>
            <person name="Grymonprez B."/>
            <person name="Weltjens I."/>
            <person name="Vanstreels E."/>
            <person name="Rieger M."/>
            <person name="Schaefer M."/>
            <person name="Mueller-Auer S."/>
            <person name="Gabel C."/>
            <person name="Fuchs M."/>
            <person name="Duesterhoeft A."/>
            <person name="Fritzc C."/>
            <person name="Holzer E."/>
            <person name="Moestl D."/>
            <person name="Hilbert H."/>
            <person name="Borzym K."/>
            <person name="Langer I."/>
            <person name="Beck A."/>
            <person name="Lehrach H."/>
            <person name="Reinhardt R."/>
            <person name="Pohl T.M."/>
            <person name="Eger P."/>
            <person name="Zimmermann W."/>
            <person name="Wedler H."/>
            <person name="Wambutt R."/>
            <person name="Purnelle B."/>
            <person name="Goffeau A."/>
            <person name="Cadieu E."/>
            <person name="Dreano S."/>
            <person name="Gloux S."/>
            <person name="Lelaure V."/>
            <person name="Mottier S."/>
            <person name="Galibert F."/>
            <person name="Aves S.J."/>
            <person name="Xiang Z."/>
            <person name="Hunt C."/>
            <person name="Moore K."/>
            <person name="Hurst S.M."/>
            <person name="Lucas M."/>
            <person name="Rochet M."/>
            <person name="Gaillardin C."/>
            <person name="Tallada V.A."/>
            <person name="Garzon A."/>
            <person name="Thode G."/>
            <person name="Daga R.R."/>
            <person name="Cruzado L."/>
            <person name="Jimenez J."/>
            <person name="Sanchez M."/>
            <person name="del Rey F."/>
            <person name="Benito J."/>
            <person name="Dominguez A."/>
            <person name="Revuelta J.L."/>
            <person name="Moreno S."/>
            <person name="Armstrong J."/>
            <person name="Forsburg S.L."/>
            <person name="Cerutti L."/>
            <person name="Lowe T."/>
            <person name="McCombie W.R."/>
            <person name="Paulsen I."/>
            <person name="Potashkin J."/>
            <person name="Shpakovski G.V."/>
            <person name="Ussery D."/>
            <person name="Barrell B.G."/>
            <person name="Nurse P."/>
        </authorList>
    </citation>
    <scope>NUCLEOTIDE SEQUENCE [LARGE SCALE GENOMIC DNA]</scope>
    <source>
        <strain>972 / ATCC 24843</strain>
    </source>
</reference>
<dbReference type="EMBL" id="CU329672">
    <property type="protein sequence ID" value="CAA20129.2"/>
    <property type="molecule type" value="Genomic_DNA"/>
</dbReference>
<dbReference type="PIR" id="T41174">
    <property type="entry name" value="T41174"/>
</dbReference>
<dbReference type="RefSeq" id="NP_588505.1">
    <property type="nucleotide sequence ID" value="NM_001023495.2"/>
</dbReference>
<dbReference type="SMR" id="O74479"/>
<dbReference type="BioGRID" id="275811">
    <property type="interactions" value="3"/>
</dbReference>
<dbReference type="ComplexPortal" id="CPX-25764">
    <property type="entry name" value="Mitochondrial proton translocating ATP synthase complex"/>
</dbReference>
<dbReference type="FunCoup" id="O74479">
    <property type="interactions" value="338"/>
</dbReference>
<dbReference type="STRING" id="284812.O74479"/>
<dbReference type="iPTMnet" id="O74479"/>
<dbReference type="PaxDb" id="4896-SPCC1840.06.1"/>
<dbReference type="EnsemblFungi" id="SPCC1840.06.1">
    <property type="protein sequence ID" value="SPCC1840.06.1:pep"/>
    <property type="gene ID" value="SPCC1840.06"/>
</dbReference>
<dbReference type="GeneID" id="2539241"/>
<dbReference type="KEGG" id="spo:2539241"/>
<dbReference type="PomBase" id="SPCC1840.06">
    <property type="gene designation" value="atp5"/>
</dbReference>
<dbReference type="VEuPathDB" id="FungiDB:SPCC1840.06"/>
<dbReference type="eggNOG" id="KOG1662">
    <property type="taxonomic scope" value="Eukaryota"/>
</dbReference>
<dbReference type="HOGENOM" id="CLU_085114_0_0_1"/>
<dbReference type="InParanoid" id="O74479"/>
<dbReference type="OMA" id="MVDNIQD"/>
<dbReference type="PhylomeDB" id="O74479"/>
<dbReference type="Reactome" id="R-SPO-9837999">
    <property type="pathway name" value="Mitochondrial protein degradation"/>
</dbReference>
<dbReference type="PRO" id="PR:O74479"/>
<dbReference type="Proteomes" id="UP000002485">
    <property type="component" value="Chromosome III"/>
</dbReference>
<dbReference type="GO" id="GO:0099617">
    <property type="term" value="C:matrix side of mitochondrial inner membrane"/>
    <property type="evidence" value="ECO:0000305"/>
    <property type="project" value="PomBase"/>
</dbReference>
<dbReference type="GO" id="GO:0045259">
    <property type="term" value="C:proton-transporting ATP synthase complex"/>
    <property type="evidence" value="ECO:0000266"/>
    <property type="project" value="PomBase"/>
</dbReference>
<dbReference type="GO" id="GO:0046933">
    <property type="term" value="F:proton-transporting ATP synthase activity, rotational mechanism"/>
    <property type="evidence" value="ECO:0007669"/>
    <property type="project" value="InterPro"/>
</dbReference>
<dbReference type="GO" id="GO:0005198">
    <property type="term" value="F:structural molecule activity"/>
    <property type="evidence" value="ECO:0000266"/>
    <property type="project" value="PomBase"/>
</dbReference>
<dbReference type="GO" id="GO:0042776">
    <property type="term" value="P:proton motive force-driven mitochondrial ATP synthesis"/>
    <property type="evidence" value="ECO:0000266"/>
    <property type="project" value="PomBase"/>
</dbReference>
<dbReference type="Gene3D" id="1.10.520.20">
    <property type="entry name" value="N-terminal domain of the delta subunit of the F1F0-ATP synthase"/>
    <property type="match status" value="1"/>
</dbReference>
<dbReference type="HAMAP" id="MF_01416">
    <property type="entry name" value="ATP_synth_delta_bact"/>
    <property type="match status" value="1"/>
</dbReference>
<dbReference type="InterPro" id="IPR026015">
    <property type="entry name" value="ATP_synth_OSCP/delta_N_sf"/>
</dbReference>
<dbReference type="InterPro" id="IPR000711">
    <property type="entry name" value="ATPase_OSCP/dsu"/>
</dbReference>
<dbReference type="NCBIfam" id="TIGR01145">
    <property type="entry name" value="ATP_synt_delta"/>
    <property type="match status" value="1"/>
</dbReference>
<dbReference type="PANTHER" id="PTHR11910">
    <property type="entry name" value="ATP SYNTHASE DELTA CHAIN"/>
    <property type="match status" value="1"/>
</dbReference>
<dbReference type="Pfam" id="PF00213">
    <property type="entry name" value="OSCP"/>
    <property type="match status" value="1"/>
</dbReference>
<dbReference type="PRINTS" id="PR00125">
    <property type="entry name" value="ATPASEDELTA"/>
</dbReference>
<dbReference type="SUPFAM" id="SSF47928">
    <property type="entry name" value="N-terminal domain of the delta subunit of the F1F0-ATP synthase"/>
    <property type="match status" value="1"/>
</dbReference>